<evidence type="ECO:0000250" key="1">
    <source>
        <dbReference type="UniProtKB" id="Q41062"/>
    </source>
</evidence>
<evidence type="ECO:0000255" key="2"/>
<evidence type="ECO:0000256" key="3">
    <source>
        <dbReference type="SAM" id="MobiDB-lite"/>
    </source>
</evidence>
<evidence type="ECO:0000303" key="4">
    <source>
    </source>
</evidence>
<evidence type="ECO:0000305" key="5"/>
<evidence type="ECO:0000305" key="6">
    <source>
    </source>
</evidence>
<gene>
    <name evidence="4" type="primary">secA</name>
</gene>
<name>SECA_SPIOL</name>
<reference key="1">
    <citation type="journal article" date="1995" name="J. Biol. Chem.">
        <title>Isolation and characterization of a cDNA encoding the SecA protein from spinach chloroplasts. Evidence for azide resistance of Sec-dependent protein translocation across thylakoid membranes in spinach.</title>
        <authorList>
            <person name="Berghoefer J."/>
            <person name="Karnauchov I."/>
            <person name="Herrmann R.G."/>
            <person name="Kloesgen R.B."/>
        </authorList>
    </citation>
    <scope>NUCLEOTIDE SEQUENCE [MRNA]</scope>
    <scope>FUNCTION</scope>
    <scope>CATALYTIC ACTIVITY</scope>
    <source>
        <strain>cv. Monatol</strain>
        <tissue>Leaf</tissue>
    </source>
</reference>
<feature type="transit peptide" description="Chloroplast" evidence="2">
    <location>
        <begin position="1"/>
        <end position="76" status="uncertain"/>
    </location>
</feature>
<feature type="chain" id="PRO_0000031987" description="Protein translocase subunit SecA, chloroplastic">
    <location>
        <begin position="77" status="uncertain"/>
        <end position="1036"/>
    </location>
</feature>
<feature type="region of interest" description="Disordered" evidence="3">
    <location>
        <begin position="995"/>
        <end position="1036"/>
    </location>
</feature>
<feature type="compositionally biased region" description="Basic and acidic residues" evidence="3">
    <location>
        <begin position="1000"/>
        <end position="1015"/>
    </location>
</feature>
<feature type="compositionally biased region" description="Polar residues" evidence="3">
    <location>
        <begin position="1020"/>
        <end position="1036"/>
    </location>
</feature>
<feature type="binding site" evidence="2">
    <location>
        <begin position="186"/>
        <end position="193"/>
    </location>
    <ligand>
        <name>ATP</name>
        <dbReference type="ChEBI" id="CHEBI:30616"/>
    </ligand>
</feature>
<protein>
    <recommendedName>
        <fullName evidence="5">Protein translocase subunit SecA, chloroplastic</fullName>
        <ecNumber evidence="6">7.4.2.4</ecNumber>
    </recommendedName>
</protein>
<keyword id="KW-0067">ATP-binding</keyword>
<keyword id="KW-0150">Chloroplast</keyword>
<keyword id="KW-0472">Membrane</keyword>
<keyword id="KW-0547">Nucleotide-binding</keyword>
<keyword id="KW-0934">Plastid</keyword>
<keyword id="KW-0653">Protein transport</keyword>
<keyword id="KW-1185">Reference proteome</keyword>
<keyword id="KW-0793">Thylakoid</keyword>
<keyword id="KW-0809">Transit peptide</keyword>
<keyword id="KW-1278">Translocase</keyword>
<keyword id="KW-0811">Translocation</keyword>
<keyword id="KW-0813">Transport</keyword>
<proteinExistence type="evidence at protein level"/>
<dbReference type="EC" id="7.4.2.4" evidence="6"/>
<dbReference type="EMBL" id="Z49124">
    <property type="protein sequence ID" value="CAA88933.1"/>
    <property type="molecule type" value="mRNA"/>
</dbReference>
<dbReference type="PIR" id="A57386">
    <property type="entry name" value="A57386"/>
</dbReference>
<dbReference type="SMR" id="Q36795"/>
<dbReference type="OrthoDB" id="27934at2759"/>
<dbReference type="Proteomes" id="UP001155700">
    <property type="component" value="Unplaced"/>
</dbReference>
<dbReference type="GO" id="GO:0009570">
    <property type="term" value="C:chloroplast stroma"/>
    <property type="evidence" value="ECO:0007669"/>
    <property type="project" value="UniProtKB-SubCell"/>
</dbReference>
<dbReference type="GO" id="GO:0009535">
    <property type="term" value="C:chloroplast thylakoid membrane"/>
    <property type="evidence" value="ECO:0007669"/>
    <property type="project" value="UniProtKB-SubCell"/>
</dbReference>
<dbReference type="GO" id="GO:0005524">
    <property type="term" value="F:ATP binding"/>
    <property type="evidence" value="ECO:0000318"/>
    <property type="project" value="GO_Central"/>
</dbReference>
<dbReference type="GO" id="GO:0016464">
    <property type="term" value="F:chloroplast protein-transporting ATPase activity"/>
    <property type="evidence" value="ECO:0007669"/>
    <property type="project" value="UniProtKB-EC"/>
</dbReference>
<dbReference type="GO" id="GO:0006886">
    <property type="term" value="P:intracellular protein transport"/>
    <property type="evidence" value="ECO:0007669"/>
    <property type="project" value="InterPro"/>
</dbReference>
<dbReference type="GO" id="GO:0017038">
    <property type="term" value="P:protein import"/>
    <property type="evidence" value="ECO:0007669"/>
    <property type="project" value="InterPro"/>
</dbReference>
<dbReference type="GO" id="GO:0006605">
    <property type="term" value="P:protein targeting"/>
    <property type="evidence" value="ECO:0007669"/>
    <property type="project" value="InterPro"/>
</dbReference>
<dbReference type="CDD" id="cd17928">
    <property type="entry name" value="DEXDc_SecA"/>
    <property type="match status" value="1"/>
</dbReference>
<dbReference type="CDD" id="cd18803">
    <property type="entry name" value="SF2_C_secA"/>
    <property type="match status" value="1"/>
</dbReference>
<dbReference type="FunFam" id="3.90.1440.10:FF:000003">
    <property type="entry name" value="Preprotein translocase SecA subunit"/>
    <property type="match status" value="1"/>
</dbReference>
<dbReference type="FunFam" id="1.10.3060.10:FF:000003">
    <property type="entry name" value="Protein translocase subunit SecA"/>
    <property type="match status" value="1"/>
</dbReference>
<dbReference type="FunFam" id="3.40.50.300:FF:000334">
    <property type="entry name" value="Protein translocase subunit SecA"/>
    <property type="match status" value="1"/>
</dbReference>
<dbReference type="Gene3D" id="1.10.3060.10">
    <property type="entry name" value="Helical scaffold and wing domains of SecA"/>
    <property type="match status" value="1"/>
</dbReference>
<dbReference type="Gene3D" id="3.40.50.300">
    <property type="entry name" value="P-loop containing nucleotide triphosphate hydrolases"/>
    <property type="match status" value="2"/>
</dbReference>
<dbReference type="Gene3D" id="3.90.1440.10">
    <property type="entry name" value="SecA, preprotein cross-linking domain"/>
    <property type="match status" value="1"/>
</dbReference>
<dbReference type="HAMAP" id="MF_01382">
    <property type="entry name" value="SecA"/>
    <property type="match status" value="1"/>
</dbReference>
<dbReference type="InterPro" id="IPR014001">
    <property type="entry name" value="Helicase_ATP-bd"/>
</dbReference>
<dbReference type="InterPro" id="IPR027417">
    <property type="entry name" value="P-loop_NTPase"/>
</dbReference>
<dbReference type="InterPro" id="IPR000185">
    <property type="entry name" value="SecA"/>
</dbReference>
<dbReference type="InterPro" id="IPR020937">
    <property type="entry name" value="SecA_CS"/>
</dbReference>
<dbReference type="InterPro" id="IPR011115">
    <property type="entry name" value="SecA_DEAD"/>
</dbReference>
<dbReference type="InterPro" id="IPR014018">
    <property type="entry name" value="SecA_motor_DEAD"/>
</dbReference>
<dbReference type="InterPro" id="IPR011130">
    <property type="entry name" value="SecA_preprotein_X-link_dom"/>
</dbReference>
<dbReference type="InterPro" id="IPR044722">
    <property type="entry name" value="SecA_SF2_C"/>
</dbReference>
<dbReference type="InterPro" id="IPR011116">
    <property type="entry name" value="SecA_Wing/Scaffold"/>
</dbReference>
<dbReference type="InterPro" id="IPR036266">
    <property type="entry name" value="SecA_Wing/Scaffold_sf"/>
</dbReference>
<dbReference type="InterPro" id="IPR036670">
    <property type="entry name" value="SecA_X-link_sf"/>
</dbReference>
<dbReference type="NCBIfam" id="TIGR00963">
    <property type="entry name" value="secA"/>
    <property type="match status" value="1"/>
</dbReference>
<dbReference type="PANTHER" id="PTHR30612:SF0">
    <property type="entry name" value="CHLOROPLAST PROTEIN-TRANSPORTING ATPASE"/>
    <property type="match status" value="1"/>
</dbReference>
<dbReference type="PANTHER" id="PTHR30612">
    <property type="entry name" value="SECA INNER MEMBRANE COMPONENT OF SEC PROTEIN SECRETION SYSTEM"/>
    <property type="match status" value="1"/>
</dbReference>
<dbReference type="Pfam" id="PF21090">
    <property type="entry name" value="P-loop_SecA"/>
    <property type="match status" value="1"/>
</dbReference>
<dbReference type="Pfam" id="PF07517">
    <property type="entry name" value="SecA_DEAD"/>
    <property type="match status" value="1"/>
</dbReference>
<dbReference type="Pfam" id="PF01043">
    <property type="entry name" value="SecA_PP_bind"/>
    <property type="match status" value="1"/>
</dbReference>
<dbReference type="Pfam" id="PF07516">
    <property type="entry name" value="SecA_SW"/>
    <property type="match status" value="1"/>
</dbReference>
<dbReference type="PRINTS" id="PR00906">
    <property type="entry name" value="SECA"/>
</dbReference>
<dbReference type="SMART" id="SM00957">
    <property type="entry name" value="SecA_DEAD"/>
    <property type="match status" value="1"/>
</dbReference>
<dbReference type="SMART" id="SM00958">
    <property type="entry name" value="SecA_PP_bind"/>
    <property type="match status" value="1"/>
</dbReference>
<dbReference type="SUPFAM" id="SSF81886">
    <property type="entry name" value="Helical scaffold and wing domains of SecA"/>
    <property type="match status" value="1"/>
</dbReference>
<dbReference type="SUPFAM" id="SSF52540">
    <property type="entry name" value="P-loop containing nucleoside triphosphate hydrolases"/>
    <property type="match status" value="2"/>
</dbReference>
<dbReference type="SUPFAM" id="SSF81767">
    <property type="entry name" value="Pre-protein crosslinking domain of SecA"/>
    <property type="match status" value="1"/>
</dbReference>
<dbReference type="PROSITE" id="PS01312">
    <property type="entry name" value="SECA"/>
    <property type="match status" value="1"/>
</dbReference>
<dbReference type="PROSITE" id="PS51196">
    <property type="entry name" value="SECA_MOTOR_DEAD"/>
    <property type="match status" value="1"/>
</dbReference>
<organism>
    <name type="scientific">Spinacia oleracea</name>
    <name type="common">Spinach</name>
    <dbReference type="NCBI Taxonomy" id="3562"/>
    <lineage>
        <taxon>Eukaryota</taxon>
        <taxon>Viridiplantae</taxon>
        <taxon>Streptophyta</taxon>
        <taxon>Embryophyta</taxon>
        <taxon>Tracheophyta</taxon>
        <taxon>Spermatophyta</taxon>
        <taxon>Magnoliopsida</taxon>
        <taxon>eudicotyledons</taxon>
        <taxon>Gunneridae</taxon>
        <taxon>Pentapetalae</taxon>
        <taxon>Caryophyllales</taxon>
        <taxon>Chenopodiaceae</taxon>
        <taxon>Chenopodioideae</taxon>
        <taxon>Anserineae</taxon>
        <taxon>Spinacia</taxon>
    </lineage>
</organism>
<sequence>MESCARSASQMSSSSCCRCSSFNQKLKQGGIGGGSLPVSFSCVMIGGGGGRRLIDQERGKVRGRERKIGELMQVRASAQGGLLNLGNLLFNFKGGDPAESTKQQYASTVTLINQLEPQISSLTDSQLTDRTSLLRQRALSGESLDSILPEAFAVVREASKRVLGLRPFDVQLIGGMVLHKGEIAEMRTGEGKTLVAILPAYLNALTGKGVHVVTVNDYLARRDCEWVGQVARFLGLKVGLVQQNMTSEVRRENYLCDITYVTNSELGFDFLRDNLATSVDELVLRGFNFCVIDEVDSILIDEARTPLIISGPAEKPSERYYKAAKIAAAFERDIHYTVDEKQKTVLIMEQGYQDAEEILDVEDLYDPREQWALYILNAIKAKELFLKDVNYIIRGKEILIVDEFTGRVMQGRRWSDGLHQAVEAKEGVPIQNETITLASISYQNFFLQFPKLCGMTGTAATESAEFESIYKLKVTIVPTNKPMIRKDESDVVFRATSGKWRAVVVEISRMHKTGLPVLVGTTSVEQSESLSEQLQQASIPHEVLNAKPENVEREAEIVAQSGRLGAVTIATNMAGRGTDIILGGNAEFMARLKIREMLMPRVVRPGDGGFVSMKKPPPMKTWKVKETLFPCKLSQKNAKLVDEAVQLAVKTWGQRSLSELEAEERLSYSCEKGPAQDEVIAKLRHAFLEVAKEYKTFTDEEKNKVVLAGGLHVIGTERHESRRIDNQLRGRSGRQGDPGSSRFFLSLEDNIFRVFGGDRIQGLMRAFRVEDLPIESKMLTRALDEAQRKVENYFFDIRKQLFEYDEVLNSQRDRVYVERRRALESDNLESLLIEYAELTMDDILEANIGSDAPKENWDLEKLIAKLQQYCYLLNDLTPELLSNNCSTYEDLQDYLRRCGREAYLQKKDMVENQAPGLMKEAERFLILSNIDRLWKEHLQAIKFVQQAVGLRGYAQRDPLIEYKLEGYNLFLEMMAQIRRNVIYSAYQFKPVVVKNQEQQQKGKPDSSNVENKRIGDANLNPVSVTESPSSDSPQNT</sequence>
<accession>Q36795</accession>
<comment type="function">
    <text evidence="6">Has a central role in coupling the hydrolysis of ATP to the transfer of proteins across the thylakoid membrane.</text>
</comment>
<comment type="catalytic activity">
    <reaction evidence="6">
        <text>ATP + H2O + chloroplast-proteinSide 1 = ADP + phosphate + chloroplast-proteinSide 2.</text>
        <dbReference type="EC" id="7.4.2.4"/>
    </reaction>
</comment>
<comment type="subcellular location">
    <subcellularLocation>
        <location evidence="1">Plastid</location>
        <location evidence="1">Chloroplast stroma</location>
    </subcellularLocation>
    <subcellularLocation>
        <location evidence="1">Plastid</location>
        <location evidence="1">Chloroplast thylakoid membrane</location>
        <topology evidence="5">Peripheral membrane protein</topology>
    </subcellularLocation>
    <text evidence="1">A minor fraction is associated with the chloroplast thylakoid membrane.</text>
</comment>
<comment type="similarity">
    <text evidence="5">Belongs to the SecA family.</text>
</comment>